<reference key="1">
    <citation type="submission" date="2008-03" db="EMBL/GenBank/DDBJ databases">
        <title>Complete sequence of Leptothrix cholodnii SP-6.</title>
        <authorList>
            <consortium name="US DOE Joint Genome Institute"/>
            <person name="Copeland A."/>
            <person name="Lucas S."/>
            <person name="Lapidus A."/>
            <person name="Glavina del Rio T."/>
            <person name="Dalin E."/>
            <person name="Tice H."/>
            <person name="Bruce D."/>
            <person name="Goodwin L."/>
            <person name="Pitluck S."/>
            <person name="Chertkov O."/>
            <person name="Brettin T."/>
            <person name="Detter J.C."/>
            <person name="Han C."/>
            <person name="Kuske C.R."/>
            <person name="Schmutz J."/>
            <person name="Larimer F."/>
            <person name="Land M."/>
            <person name="Hauser L."/>
            <person name="Kyrpides N."/>
            <person name="Lykidis A."/>
            <person name="Emerson D."/>
            <person name="Richardson P."/>
        </authorList>
    </citation>
    <scope>NUCLEOTIDE SEQUENCE [LARGE SCALE GENOMIC DNA]</scope>
    <source>
        <strain>ATCC 51168 / LMG 8142 / SP-6</strain>
    </source>
</reference>
<feature type="chain" id="PRO_1000142530" description="Large ribosomal subunit protein bL25">
    <location>
        <begin position="1"/>
        <end position="208"/>
    </location>
</feature>
<gene>
    <name evidence="1" type="primary">rplY</name>
    <name evidence="1" type="synonym">ctc</name>
    <name type="ordered locus">Lcho_3499</name>
</gene>
<comment type="function">
    <text evidence="1">This is one of the proteins that binds to the 5S RNA in the ribosome where it forms part of the central protuberance.</text>
</comment>
<comment type="subunit">
    <text evidence="1">Part of the 50S ribosomal subunit; part of the 5S rRNA/L5/L18/L25 subcomplex. Contacts the 5S rRNA. Binds to the 5S rRNA independently of L5 and L18.</text>
</comment>
<comment type="similarity">
    <text evidence="1">Belongs to the bacterial ribosomal protein bL25 family. CTC subfamily.</text>
</comment>
<evidence type="ECO:0000255" key="1">
    <source>
        <dbReference type="HAMAP-Rule" id="MF_01334"/>
    </source>
</evidence>
<evidence type="ECO:0000305" key="2"/>
<sequence length="208" mass="22762">MKFVAFARELQGTGASRRLRHGGKVPGIVYGGSGKPTSIELDHNALYHALKKEAFHSSILEMELAGQSEKVVLRALQMHAFKQLVLHVDFQRVDETTRIKKKVPLHFVNEAESQAVKLDKCLINHVVSELEIECLAEKLPEFLTVDLGGLSKGQSLHVDDLKLEASIKVVTHGRKNPVVATVVPIVEEEVIVAAPVEAPAKGKGKGKK</sequence>
<keyword id="KW-1185">Reference proteome</keyword>
<keyword id="KW-0687">Ribonucleoprotein</keyword>
<keyword id="KW-0689">Ribosomal protein</keyword>
<keyword id="KW-0694">RNA-binding</keyword>
<keyword id="KW-0699">rRNA-binding</keyword>
<dbReference type="EMBL" id="CP001013">
    <property type="protein sequence ID" value="ACB35753.1"/>
    <property type="molecule type" value="Genomic_DNA"/>
</dbReference>
<dbReference type="RefSeq" id="WP_012348500.1">
    <property type="nucleotide sequence ID" value="NC_010524.1"/>
</dbReference>
<dbReference type="SMR" id="B1Y3Q0"/>
<dbReference type="STRING" id="395495.Lcho_3499"/>
<dbReference type="KEGG" id="lch:Lcho_3499"/>
<dbReference type="eggNOG" id="COG1825">
    <property type="taxonomic scope" value="Bacteria"/>
</dbReference>
<dbReference type="HOGENOM" id="CLU_075939_0_1_4"/>
<dbReference type="OrthoDB" id="9806411at2"/>
<dbReference type="Proteomes" id="UP000001693">
    <property type="component" value="Chromosome"/>
</dbReference>
<dbReference type="GO" id="GO:0022625">
    <property type="term" value="C:cytosolic large ribosomal subunit"/>
    <property type="evidence" value="ECO:0007669"/>
    <property type="project" value="TreeGrafter"/>
</dbReference>
<dbReference type="GO" id="GO:0008097">
    <property type="term" value="F:5S rRNA binding"/>
    <property type="evidence" value="ECO:0007669"/>
    <property type="project" value="InterPro"/>
</dbReference>
<dbReference type="GO" id="GO:0003735">
    <property type="term" value="F:structural constituent of ribosome"/>
    <property type="evidence" value="ECO:0007669"/>
    <property type="project" value="InterPro"/>
</dbReference>
<dbReference type="GO" id="GO:0006412">
    <property type="term" value="P:translation"/>
    <property type="evidence" value="ECO:0007669"/>
    <property type="project" value="UniProtKB-UniRule"/>
</dbReference>
<dbReference type="CDD" id="cd00495">
    <property type="entry name" value="Ribosomal_L25_TL5_CTC"/>
    <property type="match status" value="1"/>
</dbReference>
<dbReference type="Gene3D" id="2.170.120.20">
    <property type="entry name" value="Ribosomal protein L25, beta domain"/>
    <property type="match status" value="1"/>
</dbReference>
<dbReference type="Gene3D" id="2.40.240.10">
    <property type="entry name" value="Ribosomal Protein L25, Chain P"/>
    <property type="match status" value="1"/>
</dbReference>
<dbReference type="HAMAP" id="MF_01336">
    <property type="entry name" value="Ribosomal_bL25"/>
    <property type="match status" value="1"/>
</dbReference>
<dbReference type="HAMAP" id="MF_01334">
    <property type="entry name" value="Ribosomal_bL25_CTC"/>
    <property type="match status" value="1"/>
</dbReference>
<dbReference type="InterPro" id="IPR020056">
    <property type="entry name" value="Rbsml_bL25/Gln-tRNA_synth_N"/>
</dbReference>
<dbReference type="InterPro" id="IPR011035">
    <property type="entry name" value="Ribosomal_bL25/Gln-tRNA_synth"/>
</dbReference>
<dbReference type="InterPro" id="IPR020057">
    <property type="entry name" value="Ribosomal_bL25_b-dom"/>
</dbReference>
<dbReference type="InterPro" id="IPR037121">
    <property type="entry name" value="Ribosomal_bL25_C"/>
</dbReference>
<dbReference type="InterPro" id="IPR001021">
    <property type="entry name" value="Ribosomal_bL25_long"/>
</dbReference>
<dbReference type="InterPro" id="IPR020055">
    <property type="entry name" value="Ribosomal_bL25_short"/>
</dbReference>
<dbReference type="InterPro" id="IPR029751">
    <property type="entry name" value="Ribosomal_L25_dom"/>
</dbReference>
<dbReference type="InterPro" id="IPR020930">
    <property type="entry name" value="Ribosomal_uL5_bac-type"/>
</dbReference>
<dbReference type="NCBIfam" id="TIGR00731">
    <property type="entry name" value="bL25_bact_ctc"/>
    <property type="match status" value="1"/>
</dbReference>
<dbReference type="NCBIfam" id="NF004130">
    <property type="entry name" value="PRK05618.1-5"/>
    <property type="match status" value="1"/>
</dbReference>
<dbReference type="NCBIfam" id="NF004612">
    <property type="entry name" value="PRK05943.1"/>
    <property type="match status" value="1"/>
</dbReference>
<dbReference type="PANTHER" id="PTHR33284">
    <property type="entry name" value="RIBOSOMAL PROTEIN L25/GLN-TRNA SYNTHETASE, ANTI-CODON-BINDING DOMAIN-CONTAINING PROTEIN"/>
    <property type="match status" value="1"/>
</dbReference>
<dbReference type="PANTHER" id="PTHR33284:SF1">
    <property type="entry name" value="RIBOSOMAL PROTEIN L25_GLN-TRNA SYNTHETASE, ANTI-CODON-BINDING DOMAIN-CONTAINING PROTEIN"/>
    <property type="match status" value="1"/>
</dbReference>
<dbReference type="Pfam" id="PF01386">
    <property type="entry name" value="Ribosomal_L25p"/>
    <property type="match status" value="1"/>
</dbReference>
<dbReference type="Pfam" id="PF14693">
    <property type="entry name" value="Ribosomal_TL5_C"/>
    <property type="match status" value="1"/>
</dbReference>
<dbReference type="SUPFAM" id="SSF50715">
    <property type="entry name" value="Ribosomal protein L25-like"/>
    <property type="match status" value="1"/>
</dbReference>
<proteinExistence type="inferred from homology"/>
<accession>B1Y3Q0</accession>
<organism>
    <name type="scientific">Leptothrix cholodnii (strain ATCC 51168 / LMG 8142 / SP-6)</name>
    <name type="common">Leptothrix discophora (strain SP-6)</name>
    <dbReference type="NCBI Taxonomy" id="395495"/>
    <lineage>
        <taxon>Bacteria</taxon>
        <taxon>Pseudomonadati</taxon>
        <taxon>Pseudomonadota</taxon>
        <taxon>Betaproteobacteria</taxon>
        <taxon>Burkholderiales</taxon>
        <taxon>Sphaerotilaceae</taxon>
        <taxon>Leptothrix</taxon>
    </lineage>
</organism>
<protein>
    <recommendedName>
        <fullName evidence="1">Large ribosomal subunit protein bL25</fullName>
    </recommendedName>
    <alternativeName>
        <fullName evidence="2">50S ribosomal protein L25</fullName>
    </alternativeName>
    <alternativeName>
        <fullName evidence="1">General stress protein CTC</fullName>
    </alternativeName>
</protein>
<name>RL25_LEPCP</name>